<comment type="miscellaneous">
    <text>This chain was obtained from antibody to type III pneumococci and was isolated from the serum of a single rabbit.</text>
</comment>
<keyword id="KW-1064">Adaptive immunity</keyword>
<keyword id="KW-0903">Direct protein sequencing</keyword>
<keyword id="KW-0391">Immunity</keyword>
<keyword id="KW-1280">Immunoglobulin</keyword>
<keyword id="KW-0873">Pyrrolidone carboxylic acid</keyword>
<keyword id="KW-1185">Reference proteome</keyword>
<protein>
    <recommendedName>
        <fullName>Ig heavy chain V-A2 region BS-1</fullName>
    </recommendedName>
</protein>
<sequence length="114" mass="12326">QSVKESEGGLFKPTDTLTLTCTVSGFSLSSYTVAWVRQAPGZGLEWIGILKSSGSTYYASWAKSRSTITRTQNTVNLMBSLTAZDTATYFCARITHGYLGLMDVWGPGTLVTVS</sequence>
<accession>P01827</accession>
<evidence type="ECO:0000269" key="1">
    <source>
    </source>
</evidence>
<name>HV2A_RABIT</name>
<proteinExistence type="evidence at protein level"/>
<organism>
    <name type="scientific">Oryctolagus cuniculus</name>
    <name type="common">Rabbit</name>
    <dbReference type="NCBI Taxonomy" id="9986"/>
    <lineage>
        <taxon>Eukaryota</taxon>
        <taxon>Metazoa</taxon>
        <taxon>Chordata</taxon>
        <taxon>Craniata</taxon>
        <taxon>Vertebrata</taxon>
        <taxon>Euteleostomi</taxon>
        <taxon>Mammalia</taxon>
        <taxon>Eutheria</taxon>
        <taxon>Euarchontoglires</taxon>
        <taxon>Glires</taxon>
        <taxon>Lagomorpha</taxon>
        <taxon>Leporidae</taxon>
        <taxon>Oryctolagus</taxon>
    </lineage>
</organism>
<reference key="1">
    <citation type="journal article" date="1976" name="Biochem. J.">
        <title>The V-region sequence of the H chain from a third rabbit anti-pneumococcal antibody.</title>
        <authorList>
            <person name="Jaton J.-C."/>
        </authorList>
    </citation>
    <scope>PROTEIN SEQUENCE</scope>
    <scope>PYROGLUTAMATE FORMATION AT GLN-1</scope>
</reference>
<dbReference type="PIR" id="A02103">
    <property type="entry name" value="GARB21"/>
</dbReference>
<dbReference type="FunCoup" id="P01827">
    <property type="interactions" value="255"/>
</dbReference>
<dbReference type="InParanoid" id="P01827"/>
<dbReference type="Proteomes" id="UP000001811">
    <property type="component" value="Unplaced"/>
</dbReference>
<dbReference type="GO" id="GO:0005576">
    <property type="term" value="C:extracellular region"/>
    <property type="evidence" value="ECO:0007669"/>
    <property type="project" value="UniProtKB-ARBA"/>
</dbReference>
<dbReference type="GO" id="GO:0019814">
    <property type="term" value="C:immunoglobulin complex"/>
    <property type="evidence" value="ECO:0007669"/>
    <property type="project" value="UniProtKB-KW"/>
</dbReference>
<dbReference type="GO" id="GO:0002250">
    <property type="term" value="P:adaptive immune response"/>
    <property type="evidence" value="ECO:0007669"/>
    <property type="project" value="UniProtKB-KW"/>
</dbReference>
<dbReference type="FunFam" id="2.60.40.10:FF:001878">
    <property type="entry name" value="Immunoglobulin heavy variable 1-4"/>
    <property type="match status" value="1"/>
</dbReference>
<dbReference type="Gene3D" id="2.60.40.10">
    <property type="entry name" value="Immunoglobulins"/>
    <property type="match status" value="1"/>
</dbReference>
<dbReference type="InterPro" id="IPR007110">
    <property type="entry name" value="Ig-like_dom"/>
</dbReference>
<dbReference type="InterPro" id="IPR036179">
    <property type="entry name" value="Ig-like_dom_sf"/>
</dbReference>
<dbReference type="InterPro" id="IPR013783">
    <property type="entry name" value="Ig-like_fold"/>
</dbReference>
<dbReference type="InterPro" id="IPR003599">
    <property type="entry name" value="Ig_sub"/>
</dbReference>
<dbReference type="InterPro" id="IPR013106">
    <property type="entry name" value="Ig_V-set"/>
</dbReference>
<dbReference type="InterPro" id="IPR050199">
    <property type="entry name" value="IgHV"/>
</dbReference>
<dbReference type="PANTHER" id="PTHR23266">
    <property type="entry name" value="IMMUNOGLOBULIN HEAVY CHAIN"/>
    <property type="match status" value="1"/>
</dbReference>
<dbReference type="Pfam" id="PF07686">
    <property type="entry name" value="V-set"/>
    <property type="match status" value="1"/>
</dbReference>
<dbReference type="SMART" id="SM00409">
    <property type="entry name" value="IG"/>
    <property type="match status" value="1"/>
</dbReference>
<dbReference type="SMART" id="SM00406">
    <property type="entry name" value="IGv"/>
    <property type="match status" value="1"/>
</dbReference>
<dbReference type="SUPFAM" id="SSF48726">
    <property type="entry name" value="Immunoglobulin"/>
    <property type="match status" value="1"/>
</dbReference>
<dbReference type="PROSITE" id="PS50835">
    <property type="entry name" value="IG_LIKE"/>
    <property type="match status" value="1"/>
</dbReference>
<feature type="chain" id="PRO_0000059936" description="Ig heavy chain V-A2 region BS-1">
    <location>
        <begin position="1"/>
        <end position="114" status="greater than"/>
    </location>
</feature>
<feature type="domain" description="Ig-like">
    <location>
        <begin position="1"/>
        <end position="107"/>
    </location>
</feature>
<feature type="modified residue" description="Pyrrolidone carboxylic acid" evidence="1">
    <location>
        <position position="1"/>
    </location>
</feature>
<feature type="non-terminal residue">
    <location>
        <position position="114"/>
    </location>
</feature>